<evidence type="ECO:0000255" key="1"/>
<evidence type="ECO:0000255" key="2">
    <source>
        <dbReference type="PROSITE-ProRule" id="PRU00498"/>
    </source>
</evidence>
<evidence type="ECO:0000256" key="3">
    <source>
        <dbReference type="SAM" id="MobiDB-lite"/>
    </source>
</evidence>
<evidence type="ECO:0000269" key="4">
    <source>
    </source>
</evidence>
<evidence type="ECO:0000303" key="5">
    <source>
    </source>
</evidence>
<evidence type="ECO:0000305" key="6"/>
<evidence type="ECO:0000305" key="7">
    <source>
    </source>
</evidence>
<organism>
    <name type="scientific">Aspergillus flavipes</name>
    <dbReference type="NCBI Taxonomy" id="41900"/>
    <lineage>
        <taxon>Eukaryota</taxon>
        <taxon>Fungi</taxon>
        <taxon>Dikarya</taxon>
        <taxon>Ascomycota</taxon>
        <taxon>Pezizomycotina</taxon>
        <taxon>Eurotiomycetes</taxon>
        <taxon>Eurotiomycetidae</taxon>
        <taxon>Eurotiales</taxon>
        <taxon>Aspergillaceae</taxon>
        <taxon>Aspergillus</taxon>
        <taxon>Aspergillus subgen. Circumdati</taxon>
    </lineage>
</organism>
<name>FFSH_ASPFV</name>
<comment type="function">
    <text evidence="4 7">MFS-type efflux transporter; part of the gene cluster that mediates the biosynthesis of the cytotoxic leucine-containing cytochalasans, including aspochalasin C, aspochalasin E, TMC-169, flavichalasine F, aspergillin PZ, aspochalasin M and flavichalasine G (PubMed:32913332). FfsH might be involved in the excretion of cytochalasans (Probable).</text>
</comment>
<comment type="subcellular location">
    <subcellularLocation>
        <location evidence="6">Cell membrane</location>
        <topology evidence="1">Multi-pass membrane protein</topology>
    </subcellularLocation>
</comment>
<comment type="similarity">
    <text evidence="6">Belongs to the major facilitator superfamily.</text>
</comment>
<sequence>MSEAEKKASQDAQHKEPMADSETQLDSDSAPSSQAEKPAKTKYPLSFWLAFGALCLTGLISAMEGSIVSTSLPSIIAELKAAFQPLYGQLADLWGRRYVMILATAIFLLGSGICGGANSMDMLIWGRAVQGIGAGGINMLVDLIICDLVPMRERGNFIGLLFLFVSIGTTSGPIIGGALTDNTTWRWVFYINLPMGGAALVLLVLFLQVKWKKELSTRDRLKRIDVVGNAILVGATFSILYALTYGGTRYPWSAANIVAPFVLGFVGLGIFIAWESNKRWCPYPVMPLHHFNSRTASASFFISFMTMILAFWVVYFYPVYFQSVLGNTPTISGVHLLPFEVSFPIFAAVGGGLVSKTGRYKPIHMVATSIVTIAIGASSVLTQHTHKAAWAVLQIFIGMGLGSLISTTLQAVQAGLPESETAASTATWAYMRSLGTIWGVSVPAAIFNNRFDQLSGQLDPSIRDNFVRGQAYEHATAQFVQSFEPATREVVIGAYTDALRRVWLVSIAFGAVTVLSTLFEKELTLRTELDSEFGLAEKKGDAKGDVERGEGQNDSREGGQNENV</sequence>
<keyword id="KW-1003">Cell membrane</keyword>
<keyword id="KW-0325">Glycoprotein</keyword>
<keyword id="KW-0472">Membrane</keyword>
<keyword id="KW-0812">Transmembrane</keyword>
<keyword id="KW-1133">Transmembrane helix</keyword>
<keyword id="KW-0813">Transport</keyword>
<proteinExistence type="inferred from homology"/>
<gene>
    <name evidence="5" type="primary">ffsH</name>
</gene>
<dbReference type="EMBL" id="MT586757">
    <property type="protein sequence ID" value="QOG08945.1"/>
    <property type="molecule type" value="Genomic_DNA"/>
</dbReference>
<dbReference type="SMR" id="A0A7L8UVD5"/>
<dbReference type="GlyCosmos" id="A0A7L8UVD5">
    <property type="glycosylation" value="2 sites, No reported glycans"/>
</dbReference>
<dbReference type="GO" id="GO:0005886">
    <property type="term" value="C:plasma membrane"/>
    <property type="evidence" value="ECO:0007669"/>
    <property type="project" value="UniProtKB-SubCell"/>
</dbReference>
<dbReference type="GO" id="GO:0022857">
    <property type="term" value="F:transmembrane transporter activity"/>
    <property type="evidence" value="ECO:0007669"/>
    <property type="project" value="InterPro"/>
</dbReference>
<dbReference type="CDD" id="cd17502">
    <property type="entry name" value="MFS_Azr1_MDR_like"/>
    <property type="match status" value="1"/>
</dbReference>
<dbReference type="Gene3D" id="1.20.1250.20">
    <property type="entry name" value="MFS general substrate transporter like domains"/>
    <property type="match status" value="2"/>
</dbReference>
<dbReference type="InterPro" id="IPR011701">
    <property type="entry name" value="MFS"/>
</dbReference>
<dbReference type="InterPro" id="IPR020846">
    <property type="entry name" value="MFS_dom"/>
</dbReference>
<dbReference type="InterPro" id="IPR036259">
    <property type="entry name" value="MFS_trans_sf"/>
</dbReference>
<dbReference type="PANTHER" id="PTHR23501">
    <property type="entry name" value="MAJOR FACILITATOR SUPERFAMILY"/>
    <property type="match status" value="1"/>
</dbReference>
<dbReference type="PANTHER" id="PTHR23501:SF187">
    <property type="entry name" value="MAJOR FACILITATOR SUPERFAMILY (MFS) PROFILE DOMAIN-CONTAINING PROTEIN"/>
    <property type="match status" value="1"/>
</dbReference>
<dbReference type="Pfam" id="PF07690">
    <property type="entry name" value="MFS_1"/>
    <property type="match status" value="1"/>
</dbReference>
<dbReference type="SUPFAM" id="SSF103473">
    <property type="entry name" value="MFS general substrate transporter"/>
    <property type="match status" value="1"/>
</dbReference>
<dbReference type="PROSITE" id="PS50850">
    <property type="entry name" value="MFS"/>
    <property type="match status" value="1"/>
</dbReference>
<protein>
    <recommendedName>
        <fullName evidence="5">MFS-type efflux transporter ffsH</fullName>
    </recommendedName>
    <alternativeName>
        <fullName evidence="5">Cytochalasans biosynthesis cluster protein ffsH</fullName>
    </alternativeName>
</protein>
<reference key="1">
    <citation type="journal article" date="2020" name="J. Antibiot.">
        <title>Discovery and characterization of a cytochalasan biosynthetic cluster from the marine-derived fungus Aspergillus flavipes CNL-338.</title>
        <authorList>
            <person name="Heard S.C."/>
            <person name="Wu G."/>
            <person name="Winter J.M."/>
        </authorList>
    </citation>
    <scope>NUCLEOTIDE SEQUENCE [GENOMIC DNA]</scope>
    <scope>FUNCTION</scope>
    <source>
        <strain>CNL-338</strain>
    </source>
</reference>
<accession>A0A7L8UVD5</accession>
<feature type="chain" id="PRO_0000454528" description="MFS-type efflux transporter ffsH">
    <location>
        <begin position="1"/>
        <end position="564"/>
    </location>
</feature>
<feature type="transmembrane region" description="Helical" evidence="1">
    <location>
        <begin position="43"/>
        <end position="63"/>
    </location>
</feature>
<feature type="transmembrane region" description="Helical" evidence="1">
    <location>
        <begin position="98"/>
        <end position="118"/>
    </location>
</feature>
<feature type="transmembrane region" description="Helical" evidence="1">
    <location>
        <begin position="131"/>
        <end position="151"/>
    </location>
</feature>
<feature type="transmembrane region" description="Helical" evidence="1">
    <location>
        <begin position="157"/>
        <end position="177"/>
    </location>
</feature>
<feature type="transmembrane region" description="Helical" evidence="1">
    <location>
        <begin position="187"/>
        <end position="207"/>
    </location>
</feature>
<feature type="transmembrane region" description="Helical" evidence="1">
    <location>
        <begin position="226"/>
        <end position="246"/>
    </location>
</feature>
<feature type="transmembrane region" description="Helical" evidence="1">
    <location>
        <begin position="254"/>
        <end position="274"/>
    </location>
</feature>
<feature type="transmembrane region" description="Helical" evidence="1">
    <location>
        <begin position="300"/>
        <end position="320"/>
    </location>
</feature>
<feature type="transmembrane region" description="Helical" evidence="1">
    <location>
        <begin position="334"/>
        <end position="354"/>
    </location>
</feature>
<feature type="transmembrane region" description="Helical" evidence="1">
    <location>
        <begin position="362"/>
        <end position="382"/>
    </location>
</feature>
<feature type="transmembrane region" description="Helical" evidence="1">
    <location>
        <begin position="389"/>
        <end position="409"/>
    </location>
</feature>
<feature type="transmembrane region" description="Helical" evidence="1">
    <location>
        <begin position="427"/>
        <end position="447"/>
    </location>
</feature>
<feature type="transmembrane region" description="Helical" evidence="1">
    <location>
        <begin position="502"/>
        <end position="522"/>
    </location>
</feature>
<feature type="region of interest" description="Disordered" evidence="3">
    <location>
        <begin position="1"/>
        <end position="37"/>
    </location>
</feature>
<feature type="region of interest" description="Disordered" evidence="3">
    <location>
        <begin position="540"/>
        <end position="564"/>
    </location>
</feature>
<feature type="compositionally biased region" description="Basic and acidic residues" evidence="3">
    <location>
        <begin position="1"/>
        <end position="18"/>
    </location>
</feature>
<feature type="compositionally biased region" description="Polar residues" evidence="3">
    <location>
        <begin position="21"/>
        <end position="35"/>
    </location>
</feature>
<feature type="glycosylation site" description="N-linked (GlcNAc...) asparagine" evidence="2">
    <location>
        <position position="182"/>
    </location>
</feature>
<feature type="glycosylation site" description="N-linked (GlcNAc...) asparagine" evidence="2">
    <location>
        <position position="553"/>
    </location>
</feature>